<organism>
    <name type="scientific">Synechocystis sp. (strain ATCC 27184 / PCC 6803 / Kazusa)</name>
    <dbReference type="NCBI Taxonomy" id="1111708"/>
    <lineage>
        <taxon>Bacteria</taxon>
        <taxon>Bacillati</taxon>
        <taxon>Cyanobacteriota</taxon>
        <taxon>Cyanophyceae</taxon>
        <taxon>Synechococcales</taxon>
        <taxon>Merismopediaceae</taxon>
        <taxon>Synechocystis</taxon>
    </lineage>
</organism>
<sequence>MALSDTQILAALVVALLPAFLAFRLSTELYK</sequence>
<reference key="1">
    <citation type="journal article" date="1996" name="DNA Res.">
        <title>Sequence analysis of the genome of the unicellular cyanobacterium Synechocystis sp. strain PCC6803. II. Sequence determination of the entire genome and assignment of potential protein-coding regions.</title>
        <authorList>
            <person name="Kaneko T."/>
            <person name="Sato S."/>
            <person name="Kotani H."/>
            <person name="Tanaka A."/>
            <person name="Asamizu E."/>
            <person name="Nakamura Y."/>
            <person name="Miyajima N."/>
            <person name="Hirosawa M."/>
            <person name="Sugiura M."/>
            <person name="Sasamoto S."/>
            <person name="Kimura T."/>
            <person name="Hosouchi T."/>
            <person name="Matsuno A."/>
            <person name="Muraki A."/>
            <person name="Nakazaki N."/>
            <person name="Naruo K."/>
            <person name="Okumura S."/>
            <person name="Shimpo S."/>
            <person name="Takeuchi C."/>
            <person name="Wada T."/>
            <person name="Watanabe A."/>
            <person name="Yamada M."/>
            <person name="Yasuda M."/>
            <person name="Tabata S."/>
        </authorList>
    </citation>
    <scope>NUCLEOTIDE SEQUENCE [LARGE SCALE GENOMIC DNA]</scope>
    <source>
        <strain>ATCC 27184 / PCC 6803 / Kazusa</strain>
    </source>
</reference>
<name>PSAM_SYNY3</name>
<dbReference type="EMBL" id="BA000022">
    <property type="protein sequence ID" value="BAA17005.1"/>
    <property type="molecule type" value="Genomic_DNA"/>
</dbReference>
<dbReference type="PIR" id="S74965">
    <property type="entry name" value="S74965"/>
</dbReference>
<dbReference type="PDB" id="4KT0">
    <property type="method" value="X-ray"/>
    <property type="resolution" value="2.80 A"/>
    <property type="chains" value="M=1-31"/>
</dbReference>
<dbReference type="PDB" id="4L6V">
    <property type="method" value="X-ray"/>
    <property type="resolution" value="3.80 A"/>
    <property type="chains" value="7/M/m=1-31"/>
</dbReference>
<dbReference type="PDB" id="5OY0">
    <property type="method" value="X-ray"/>
    <property type="resolution" value="2.50 A"/>
    <property type="chains" value="9/M/m=1-31"/>
</dbReference>
<dbReference type="PDB" id="6HQB">
    <property type="method" value="X-ray"/>
    <property type="resolution" value="4.00 A"/>
    <property type="chains" value="M=1-31"/>
</dbReference>
<dbReference type="PDB" id="6NWA">
    <property type="method" value="EM"/>
    <property type="resolution" value="3.48 A"/>
    <property type="chains" value="M/V/m=1-31"/>
</dbReference>
<dbReference type="PDB" id="6UZV">
    <property type="method" value="EM"/>
    <property type="resolution" value="3.10 A"/>
    <property type="chains" value="9/M/m=1-31"/>
</dbReference>
<dbReference type="PDB" id="7O1V">
    <property type="method" value="EM"/>
    <property type="resolution" value="4.31 A"/>
    <property type="chains" value="M=1-31"/>
</dbReference>
<dbReference type="PDB" id="7UMH">
    <property type="method" value="EM"/>
    <property type="resolution" value="2.60 A"/>
    <property type="chains" value="M/V/m=1-31"/>
</dbReference>
<dbReference type="PDB" id="8AM5">
    <property type="method" value="EM"/>
    <property type="resolution" value="3.10 A"/>
    <property type="chains" value="m=1-31"/>
</dbReference>
<dbReference type="PDB" id="8ASL">
    <property type="method" value="EM"/>
    <property type="resolution" value="3.15 A"/>
    <property type="chains" value="m=1-31"/>
</dbReference>
<dbReference type="PDB" id="8ASP">
    <property type="method" value="EM"/>
    <property type="resolution" value="2.90 A"/>
    <property type="chains" value="m=1-31"/>
</dbReference>
<dbReference type="PDB" id="9AU4">
    <property type="method" value="EM"/>
    <property type="resolution" value="2.03 A"/>
    <property type="chains" value="M/V/m=1-31"/>
</dbReference>
<dbReference type="PDBsum" id="4KT0"/>
<dbReference type="PDBsum" id="4L6V"/>
<dbReference type="PDBsum" id="5OY0"/>
<dbReference type="PDBsum" id="6HQB"/>
<dbReference type="PDBsum" id="6NWA"/>
<dbReference type="PDBsum" id="6UZV"/>
<dbReference type="PDBsum" id="7O1V"/>
<dbReference type="PDBsum" id="7UMH"/>
<dbReference type="PDBsum" id="8AM5"/>
<dbReference type="PDBsum" id="8ASL"/>
<dbReference type="PDBsum" id="8ASP"/>
<dbReference type="PDBsum" id="9AU4"/>
<dbReference type="EMDB" id="EMD-0524"/>
<dbReference type="EMDB" id="EMD-12697"/>
<dbReference type="EMDB" id="EMD-15522"/>
<dbReference type="EMDB" id="EMD-15618"/>
<dbReference type="EMDB" id="EMD-15621"/>
<dbReference type="EMDB" id="EMD-20963"/>
<dbReference type="EMDB" id="EMD-26601"/>
<dbReference type="EMDB" id="EMD-43843"/>
<dbReference type="SMR" id="P72986"/>
<dbReference type="IntAct" id="P72986">
    <property type="interactions" value="1"/>
</dbReference>
<dbReference type="STRING" id="1148.gene:10497866"/>
<dbReference type="PaxDb" id="1148-1652080"/>
<dbReference type="EnsemblBacteria" id="BAA17005">
    <property type="protein sequence ID" value="BAA17005"/>
    <property type="gene ID" value="BAA17005"/>
</dbReference>
<dbReference type="KEGG" id="syn:smr0005"/>
<dbReference type="InParanoid" id="P72986"/>
<dbReference type="BioCyc" id="MetaCyc:PSAM-MONOMER"/>
<dbReference type="Proteomes" id="UP000001425">
    <property type="component" value="Chromosome"/>
</dbReference>
<dbReference type="GO" id="GO:0009522">
    <property type="term" value="C:photosystem I"/>
    <property type="evidence" value="ECO:0007669"/>
    <property type="project" value="UniProtKB-KW"/>
</dbReference>
<dbReference type="GO" id="GO:0031676">
    <property type="term" value="C:plasma membrane-derived thylakoid membrane"/>
    <property type="evidence" value="ECO:0007669"/>
    <property type="project" value="UniProtKB-SubCell"/>
</dbReference>
<dbReference type="GO" id="GO:0015979">
    <property type="term" value="P:photosynthesis"/>
    <property type="evidence" value="ECO:0007669"/>
    <property type="project" value="UniProtKB-UniRule"/>
</dbReference>
<dbReference type="HAMAP" id="MF_00828">
    <property type="entry name" value="PSI_PsaM"/>
    <property type="match status" value="1"/>
</dbReference>
<dbReference type="InterPro" id="IPR010010">
    <property type="entry name" value="PSI_PsaM"/>
</dbReference>
<dbReference type="InterPro" id="IPR037279">
    <property type="entry name" value="PSI_PsaM_sf"/>
</dbReference>
<dbReference type="NCBIfam" id="TIGR03053">
    <property type="entry name" value="PS_I_psaM"/>
    <property type="match status" value="1"/>
</dbReference>
<dbReference type="Pfam" id="PF07465">
    <property type="entry name" value="PsaM"/>
    <property type="match status" value="1"/>
</dbReference>
<dbReference type="SUPFAM" id="SSF81548">
    <property type="entry name" value="Subunit XII of photosystem I reaction centre, PsaM"/>
    <property type="match status" value="1"/>
</dbReference>
<protein>
    <recommendedName>
        <fullName evidence="1">Photosystem I reaction center subunit XII</fullName>
    </recommendedName>
    <alternativeName>
        <fullName evidence="1">PSI-M</fullName>
    </alternativeName>
</protein>
<gene>
    <name evidence="1" type="primary">psaM</name>
    <name type="ordered locus">smr0005</name>
</gene>
<evidence type="ECO:0000255" key="1">
    <source>
        <dbReference type="HAMAP-Rule" id="MF_00828"/>
    </source>
</evidence>
<evidence type="ECO:0007829" key="2">
    <source>
        <dbReference type="PDB" id="5OY0"/>
    </source>
</evidence>
<feature type="chain" id="PRO_0000207771" description="Photosystem I reaction center subunit XII">
    <location>
        <begin position="1"/>
        <end position="31"/>
    </location>
</feature>
<feature type="transmembrane region" description="Helical" evidence="1">
    <location>
        <begin position="6"/>
        <end position="25"/>
    </location>
</feature>
<feature type="helix" evidence="2">
    <location>
        <begin position="5"/>
        <end position="8"/>
    </location>
</feature>
<feature type="helix" evidence="2">
    <location>
        <begin position="11"/>
        <end position="30"/>
    </location>
</feature>
<comment type="subcellular location">
    <subcellularLocation>
        <location evidence="1">Cellular thylakoid membrane</location>
        <topology evidence="1">Single-pass membrane protein</topology>
    </subcellularLocation>
</comment>
<comment type="similarity">
    <text evidence="1">Belongs to the PsaM family.</text>
</comment>
<keyword id="KW-0002">3D-structure</keyword>
<keyword id="KW-0472">Membrane</keyword>
<keyword id="KW-0602">Photosynthesis</keyword>
<keyword id="KW-0603">Photosystem I</keyword>
<keyword id="KW-1185">Reference proteome</keyword>
<keyword id="KW-0793">Thylakoid</keyword>
<keyword id="KW-0812">Transmembrane</keyword>
<keyword id="KW-1133">Transmembrane helix</keyword>
<proteinExistence type="evidence at protein level"/>
<accession>P72986</accession>